<feature type="chain" id="PRO_0000407562" description="Probable glucuronosyltransferase Os10g0205300">
    <location>
        <begin position="1"/>
        <end position="351"/>
    </location>
</feature>
<feature type="topological domain" description="Cytoplasmic" evidence="2">
    <location>
        <begin position="1"/>
        <end position="11"/>
    </location>
</feature>
<feature type="transmembrane region" description="Helical; Signal-anchor for type II membrane protein" evidence="2">
    <location>
        <begin position="12"/>
        <end position="32"/>
    </location>
</feature>
<feature type="topological domain" description="Lumenal" evidence="2">
    <location>
        <begin position="33"/>
        <end position="351"/>
    </location>
</feature>
<feature type="region of interest" description="Disordered" evidence="3">
    <location>
        <begin position="138"/>
        <end position="169"/>
    </location>
</feature>
<feature type="compositionally biased region" description="Basic and acidic residues" evidence="3">
    <location>
        <begin position="156"/>
        <end position="169"/>
    </location>
</feature>
<feature type="glycosylation site" description="N-linked (GlcNAc...) asparagine" evidence="2">
    <location>
        <position position="259"/>
    </location>
</feature>
<feature type="sequence conflict" description="In Ref. 6; AK107374." evidence="4" ref="6">
    <original>A</original>
    <variation>P</variation>
    <location>
        <position position="216"/>
    </location>
</feature>
<comment type="function">
    <text evidence="1">Involved in the synthesis of glucuronoxylan hemicellulose in secondary cell walls.</text>
</comment>
<comment type="subcellular location">
    <subcellularLocation>
        <location evidence="1">Golgi apparatus membrane</location>
        <topology evidence="1">Single-pass type II membrane protein</topology>
    </subcellularLocation>
</comment>
<comment type="similarity">
    <text evidence="4">Belongs to the glycosyltransferase 43 family.</text>
</comment>
<organism>
    <name type="scientific">Oryza sativa subsp. japonica</name>
    <name type="common">Rice</name>
    <dbReference type="NCBI Taxonomy" id="39947"/>
    <lineage>
        <taxon>Eukaryota</taxon>
        <taxon>Viridiplantae</taxon>
        <taxon>Streptophyta</taxon>
        <taxon>Embryophyta</taxon>
        <taxon>Tracheophyta</taxon>
        <taxon>Spermatophyta</taxon>
        <taxon>Magnoliopsida</taxon>
        <taxon>Liliopsida</taxon>
        <taxon>Poales</taxon>
        <taxon>Poaceae</taxon>
        <taxon>BOP clade</taxon>
        <taxon>Oryzoideae</taxon>
        <taxon>Oryzeae</taxon>
        <taxon>Oryzinae</taxon>
        <taxon>Oryza</taxon>
        <taxon>Oryza sativa</taxon>
    </lineage>
</organism>
<accession>Q8S626</accession>
<evidence type="ECO:0000250" key="1"/>
<evidence type="ECO:0000255" key="2"/>
<evidence type="ECO:0000256" key="3">
    <source>
        <dbReference type="SAM" id="MobiDB-lite"/>
    </source>
</evidence>
<evidence type="ECO:0000305" key="4"/>
<keyword id="KW-0961">Cell wall biogenesis/degradation</keyword>
<keyword id="KW-0325">Glycoprotein</keyword>
<keyword id="KW-0328">Glycosyltransferase</keyword>
<keyword id="KW-0333">Golgi apparatus</keyword>
<keyword id="KW-0472">Membrane</keyword>
<keyword id="KW-1185">Reference proteome</keyword>
<keyword id="KW-0735">Signal-anchor</keyword>
<keyword id="KW-0808">Transferase</keyword>
<keyword id="KW-0812">Transmembrane</keyword>
<keyword id="KW-1133">Transmembrane helix</keyword>
<gene>
    <name type="ordered locus">Os10g0205300</name>
    <name type="ordered locus">LOC_Os10g13810</name>
    <name type="ORF">OsJ_31015</name>
    <name type="ORF">OSJNBb0048O22.10</name>
</gene>
<name>GT102_ORYSJ</name>
<sequence>MAAPPCPPRRPISAPCFLLCFLLGFVAGLFPFAHRHLHLDLHLPLPPPATAILVREDPPSVVVDVDTPLPAAAEERKLLLVVTPTRARPLQAYYLRRLAHTLRLAPSPLLWLVVESGAATRDTAALLRGCGVMYRHLSSPVPDAPQDRPRRRGRRQDRPAVDSRARQRNTALDHIEHHRLHGIVYFADEDNVYSLDLFYHLRDIRSFGTWPVATLAPGKSKTILQGPVCEGSRVVGWHTTDRSKNQRRFHVDMSGFAFNSSKLWDAKNRGHQAWNYIRQLDTAKEGFQETAFIEQLVEDETHMEGVPPGCSKIMNFHLHLEDKNAIYLNGWQTTQNLDVIIPLKKEARPLL</sequence>
<proteinExistence type="evidence at transcript level"/>
<dbReference type="EC" id="2.4.-.-"/>
<dbReference type="EMBL" id="AC099325">
    <property type="protein sequence ID" value="AAM18761.1"/>
    <property type="molecule type" value="Genomic_DNA"/>
</dbReference>
<dbReference type="EMBL" id="DP000086">
    <property type="protein sequence ID" value="AAP52726.1"/>
    <property type="molecule type" value="Genomic_DNA"/>
</dbReference>
<dbReference type="EMBL" id="AP008216">
    <property type="protein sequence ID" value="BAF26224.1"/>
    <property type="molecule type" value="Genomic_DNA"/>
</dbReference>
<dbReference type="EMBL" id="AP014966">
    <property type="protein sequence ID" value="BAT10252.1"/>
    <property type="molecule type" value="Genomic_DNA"/>
</dbReference>
<dbReference type="EMBL" id="CM000147">
    <property type="protein sequence ID" value="EAZ15605.1"/>
    <property type="molecule type" value="Genomic_DNA"/>
</dbReference>
<dbReference type="EMBL" id="AK107374">
    <property type="status" value="NOT_ANNOTATED_CDS"/>
    <property type="molecule type" value="mRNA"/>
</dbReference>
<dbReference type="RefSeq" id="XP_015614636.1">
    <property type="nucleotide sequence ID" value="XM_015759150.1"/>
</dbReference>
<dbReference type="RefSeq" id="XP_015614637.1">
    <property type="nucleotide sequence ID" value="XM_015759151.1"/>
</dbReference>
<dbReference type="SMR" id="Q8S626"/>
<dbReference type="FunCoup" id="Q8S626">
    <property type="interactions" value="931"/>
</dbReference>
<dbReference type="STRING" id="39947.Q8S626"/>
<dbReference type="CAZy" id="GT43">
    <property type="family name" value="Glycosyltransferase Family 43"/>
</dbReference>
<dbReference type="PaxDb" id="39947-Q8S626"/>
<dbReference type="EnsemblPlants" id="Os10t0205300-01">
    <property type="protein sequence ID" value="Os10t0205300-01"/>
    <property type="gene ID" value="Os10g0205300"/>
</dbReference>
<dbReference type="GeneID" id="4348270"/>
<dbReference type="Gramene" id="Os10t0205300-01">
    <property type="protein sequence ID" value="Os10t0205300-01"/>
    <property type="gene ID" value="Os10g0205300"/>
</dbReference>
<dbReference type="KEGG" id="dosa:Os10g0205300"/>
<dbReference type="KEGG" id="osa:4348270"/>
<dbReference type="eggNOG" id="KOG1476">
    <property type="taxonomic scope" value="Eukaryota"/>
</dbReference>
<dbReference type="HOGENOM" id="CLU_044006_1_1_1"/>
<dbReference type="InParanoid" id="Q8S626"/>
<dbReference type="OMA" id="AFQAYFL"/>
<dbReference type="OrthoDB" id="675023at2759"/>
<dbReference type="Proteomes" id="UP000000763">
    <property type="component" value="Chromosome 10"/>
</dbReference>
<dbReference type="Proteomes" id="UP000007752">
    <property type="component" value="Chromosome 10"/>
</dbReference>
<dbReference type="Proteomes" id="UP000059680">
    <property type="component" value="Chromosome 10"/>
</dbReference>
<dbReference type="ExpressionAtlas" id="Q8S626">
    <property type="expression patterns" value="baseline and differential"/>
</dbReference>
<dbReference type="GO" id="GO:0000139">
    <property type="term" value="C:Golgi membrane"/>
    <property type="evidence" value="ECO:0000318"/>
    <property type="project" value="GO_Central"/>
</dbReference>
<dbReference type="GO" id="GO:0015018">
    <property type="term" value="F:galactosylgalactosylxylosylprotein 3-beta-glucuronosyltransferase activity"/>
    <property type="evidence" value="ECO:0007669"/>
    <property type="project" value="InterPro"/>
</dbReference>
<dbReference type="GO" id="GO:0042285">
    <property type="term" value="F:xylosyltransferase activity"/>
    <property type="evidence" value="ECO:0000318"/>
    <property type="project" value="GO_Central"/>
</dbReference>
<dbReference type="GO" id="GO:0071555">
    <property type="term" value="P:cell wall organization"/>
    <property type="evidence" value="ECO:0007669"/>
    <property type="project" value="UniProtKB-KW"/>
</dbReference>
<dbReference type="GO" id="GO:0010417">
    <property type="term" value="P:glucuronoxylan biosynthetic process"/>
    <property type="evidence" value="ECO:0000318"/>
    <property type="project" value="GO_Central"/>
</dbReference>
<dbReference type="GO" id="GO:0009834">
    <property type="term" value="P:plant-type secondary cell wall biogenesis"/>
    <property type="evidence" value="ECO:0000318"/>
    <property type="project" value="GO_Central"/>
</dbReference>
<dbReference type="CDD" id="cd00218">
    <property type="entry name" value="GlcAT-I"/>
    <property type="match status" value="1"/>
</dbReference>
<dbReference type="FunFam" id="3.90.550.10:FF:000064">
    <property type="entry name" value="Glycosyltransferases"/>
    <property type="match status" value="1"/>
</dbReference>
<dbReference type="Gene3D" id="3.90.550.10">
    <property type="entry name" value="Spore Coat Polysaccharide Biosynthesis Protein SpsA, Chain A"/>
    <property type="match status" value="1"/>
</dbReference>
<dbReference type="InterPro" id="IPR005027">
    <property type="entry name" value="Glyco_trans_43"/>
</dbReference>
<dbReference type="InterPro" id="IPR029044">
    <property type="entry name" value="Nucleotide-diphossugar_trans"/>
</dbReference>
<dbReference type="PANTHER" id="PTHR10896:SF65">
    <property type="entry name" value="GALACTOSYLGALACTOSYLXYLOSYLPROTEIN 3-BETA-GLUCURONOSYLTRANSFERASE 3"/>
    <property type="match status" value="1"/>
</dbReference>
<dbReference type="PANTHER" id="PTHR10896">
    <property type="entry name" value="GALACTOSYLGALACTOSYLXYLOSYLPROTEIN 3-BETA-GLUCURONOSYLTRANSFERASE BETA-1,3-GLUCURONYLTRANSFERASE"/>
    <property type="match status" value="1"/>
</dbReference>
<dbReference type="Pfam" id="PF03360">
    <property type="entry name" value="Glyco_transf_43"/>
    <property type="match status" value="1"/>
</dbReference>
<dbReference type="SUPFAM" id="SSF53448">
    <property type="entry name" value="Nucleotide-diphospho-sugar transferases"/>
    <property type="match status" value="1"/>
</dbReference>
<protein>
    <recommendedName>
        <fullName>Probable glucuronosyltransferase Os10g0205300</fullName>
        <ecNumber>2.4.-.-</ecNumber>
    </recommendedName>
</protein>
<reference key="1">
    <citation type="journal article" date="2003" name="Science">
        <title>In-depth view of structure, activity, and evolution of rice chromosome 10.</title>
        <authorList>
            <person name="Yu Y."/>
            <person name="Rambo T."/>
            <person name="Currie J."/>
            <person name="Saski C."/>
            <person name="Kim H.-R."/>
            <person name="Collura K."/>
            <person name="Thompson S."/>
            <person name="Simmons J."/>
            <person name="Yang T.-J."/>
            <person name="Nah G."/>
            <person name="Patel A.J."/>
            <person name="Thurmond S."/>
            <person name="Henry D."/>
            <person name="Oates R."/>
            <person name="Palmer M."/>
            <person name="Pries G."/>
            <person name="Gibson J."/>
            <person name="Anderson H."/>
            <person name="Paradkar M."/>
            <person name="Crane L."/>
            <person name="Dale J."/>
            <person name="Carver M.B."/>
            <person name="Wood T."/>
            <person name="Frisch D."/>
            <person name="Engler F."/>
            <person name="Soderlund C."/>
            <person name="Palmer L.E."/>
            <person name="Teytelman L."/>
            <person name="Nascimento L."/>
            <person name="De la Bastide M."/>
            <person name="Spiegel L."/>
            <person name="Ware D."/>
            <person name="O'Shaughnessy A."/>
            <person name="Dike S."/>
            <person name="Dedhia N."/>
            <person name="Preston R."/>
            <person name="Huang E."/>
            <person name="Ferraro K."/>
            <person name="Kuit K."/>
            <person name="Miller B."/>
            <person name="Zutavern T."/>
            <person name="Katzenberger F."/>
            <person name="Muller S."/>
            <person name="Balija V."/>
            <person name="Martienssen R.A."/>
            <person name="Stein L."/>
            <person name="Minx P."/>
            <person name="Johnson D."/>
            <person name="Cordum H."/>
            <person name="Mardis E."/>
            <person name="Cheng Z."/>
            <person name="Jiang J."/>
            <person name="Wilson R."/>
            <person name="McCombie W.R."/>
            <person name="Wing R.A."/>
            <person name="Yuan Q."/>
            <person name="Ouyang S."/>
            <person name="Liu J."/>
            <person name="Jones K.M."/>
            <person name="Gansberger K."/>
            <person name="Moffat K."/>
            <person name="Hill J."/>
            <person name="Tsitrin T."/>
            <person name="Overton L."/>
            <person name="Bera J."/>
            <person name="Kim M."/>
            <person name="Jin S."/>
            <person name="Tallon L."/>
            <person name="Ciecko A."/>
            <person name="Pai G."/>
            <person name="Van Aken S."/>
            <person name="Utterback T."/>
            <person name="Reidmuller S."/>
            <person name="Bormann J."/>
            <person name="Feldblyum T."/>
            <person name="Hsiao J."/>
            <person name="Zismann V."/>
            <person name="Blunt S."/>
            <person name="de Vazeille A.R."/>
            <person name="Shaffer T."/>
            <person name="Koo H."/>
            <person name="Suh B."/>
            <person name="Yang Q."/>
            <person name="Haas B."/>
            <person name="Peterson J."/>
            <person name="Pertea M."/>
            <person name="Volfovsky N."/>
            <person name="Wortman J."/>
            <person name="White O."/>
            <person name="Salzberg S.L."/>
            <person name="Fraser C.M."/>
            <person name="Buell C.R."/>
            <person name="Messing J."/>
            <person name="Song R."/>
            <person name="Fuks G."/>
            <person name="Llaca V."/>
            <person name="Kovchak S."/>
            <person name="Young S."/>
            <person name="Bowers J.E."/>
            <person name="Paterson A.H."/>
            <person name="Johns M.A."/>
            <person name="Mao L."/>
            <person name="Pan H."/>
            <person name="Dean R.A."/>
        </authorList>
    </citation>
    <scope>NUCLEOTIDE SEQUENCE [LARGE SCALE GENOMIC DNA]</scope>
    <source>
        <strain>cv. Nipponbare</strain>
    </source>
</reference>
<reference key="2">
    <citation type="journal article" date="2005" name="Nature">
        <title>The map-based sequence of the rice genome.</title>
        <authorList>
            <consortium name="International rice genome sequencing project (IRGSP)"/>
        </authorList>
    </citation>
    <scope>NUCLEOTIDE SEQUENCE [LARGE SCALE GENOMIC DNA]</scope>
    <source>
        <strain>cv. Nipponbare</strain>
    </source>
</reference>
<reference key="3">
    <citation type="journal article" date="2008" name="Nucleic Acids Res.">
        <title>The rice annotation project database (RAP-DB): 2008 update.</title>
        <authorList>
            <consortium name="The rice annotation project (RAP)"/>
        </authorList>
    </citation>
    <scope>GENOME REANNOTATION</scope>
    <source>
        <strain>cv. Nipponbare</strain>
    </source>
</reference>
<reference key="4">
    <citation type="journal article" date="2013" name="Rice">
        <title>Improvement of the Oryza sativa Nipponbare reference genome using next generation sequence and optical map data.</title>
        <authorList>
            <person name="Kawahara Y."/>
            <person name="de la Bastide M."/>
            <person name="Hamilton J.P."/>
            <person name="Kanamori H."/>
            <person name="McCombie W.R."/>
            <person name="Ouyang S."/>
            <person name="Schwartz D.C."/>
            <person name="Tanaka T."/>
            <person name="Wu J."/>
            <person name="Zhou S."/>
            <person name="Childs K.L."/>
            <person name="Davidson R.M."/>
            <person name="Lin H."/>
            <person name="Quesada-Ocampo L."/>
            <person name="Vaillancourt B."/>
            <person name="Sakai H."/>
            <person name="Lee S.S."/>
            <person name="Kim J."/>
            <person name="Numa H."/>
            <person name="Itoh T."/>
            <person name="Buell C.R."/>
            <person name="Matsumoto T."/>
        </authorList>
    </citation>
    <scope>GENOME REANNOTATION</scope>
    <source>
        <strain>cv. Nipponbare</strain>
    </source>
</reference>
<reference key="5">
    <citation type="journal article" date="2005" name="PLoS Biol.">
        <title>The genomes of Oryza sativa: a history of duplications.</title>
        <authorList>
            <person name="Yu J."/>
            <person name="Wang J."/>
            <person name="Lin W."/>
            <person name="Li S."/>
            <person name="Li H."/>
            <person name="Zhou J."/>
            <person name="Ni P."/>
            <person name="Dong W."/>
            <person name="Hu S."/>
            <person name="Zeng C."/>
            <person name="Zhang J."/>
            <person name="Zhang Y."/>
            <person name="Li R."/>
            <person name="Xu Z."/>
            <person name="Li S."/>
            <person name="Li X."/>
            <person name="Zheng H."/>
            <person name="Cong L."/>
            <person name="Lin L."/>
            <person name="Yin J."/>
            <person name="Geng J."/>
            <person name="Li G."/>
            <person name="Shi J."/>
            <person name="Liu J."/>
            <person name="Lv H."/>
            <person name="Li J."/>
            <person name="Wang J."/>
            <person name="Deng Y."/>
            <person name="Ran L."/>
            <person name="Shi X."/>
            <person name="Wang X."/>
            <person name="Wu Q."/>
            <person name="Li C."/>
            <person name="Ren X."/>
            <person name="Wang J."/>
            <person name="Wang X."/>
            <person name="Li D."/>
            <person name="Liu D."/>
            <person name="Zhang X."/>
            <person name="Ji Z."/>
            <person name="Zhao W."/>
            <person name="Sun Y."/>
            <person name="Zhang Z."/>
            <person name="Bao J."/>
            <person name="Han Y."/>
            <person name="Dong L."/>
            <person name="Ji J."/>
            <person name="Chen P."/>
            <person name="Wu S."/>
            <person name="Liu J."/>
            <person name="Xiao Y."/>
            <person name="Bu D."/>
            <person name="Tan J."/>
            <person name="Yang L."/>
            <person name="Ye C."/>
            <person name="Zhang J."/>
            <person name="Xu J."/>
            <person name="Zhou Y."/>
            <person name="Yu Y."/>
            <person name="Zhang B."/>
            <person name="Zhuang S."/>
            <person name="Wei H."/>
            <person name="Liu B."/>
            <person name="Lei M."/>
            <person name="Yu H."/>
            <person name="Li Y."/>
            <person name="Xu H."/>
            <person name="Wei S."/>
            <person name="He X."/>
            <person name="Fang L."/>
            <person name="Zhang Z."/>
            <person name="Zhang Y."/>
            <person name="Huang X."/>
            <person name="Su Z."/>
            <person name="Tong W."/>
            <person name="Li J."/>
            <person name="Tong Z."/>
            <person name="Li S."/>
            <person name="Ye J."/>
            <person name="Wang L."/>
            <person name="Fang L."/>
            <person name="Lei T."/>
            <person name="Chen C.-S."/>
            <person name="Chen H.-C."/>
            <person name="Xu Z."/>
            <person name="Li H."/>
            <person name="Huang H."/>
            <person name="Zhang F."/>
            <person name="Xu H."/>
            <person name="Li N."/>
            <person name="Zhao C."/>
            <person name="Li S."/>
            <person name="Dong L."/>
            <person name="Huang Y."/>
            <person name="Li L."/>
            <person name="Xi Y."/>
            <person name="Qi Q."/>
            <person name="Li W."/>
            <person name="Zhang B."/>
            <person name="Hu W."/>
            <person name="Zhang Y."/>
            <person name="Tian X."/>
            <person name="Jiao Y."/>
            <person name="Liang X."/>
            <person name="Jin J."/>
            <person name="Gao L."/>
            <person name="Zheng W."/>
            <person name="Hao B."/>
            <person name="Liu S.-M."/>
            <person name="Wang W."/>
            <person name="Yuan L."/>
            <person name="Cao M."/>
            <person name="McDermott J."/>
            <person name="Samudrala R."/>
            <person name="Wang J."/>
            <person name="Wong G.K.-S."/>
            <person name="Yang H."/>
        </authorList>
    </citation>
    <scope>NUCLEOTIDE SEQUENCE [LARGE SCALE GENOMIC DNA]</scope>
    <source>
        <strain>cv. Nipponbare</strain>
    </source>
</reference>
<reference key="6">
    <citation type="journal article" date="2003" name="Science">
        <title>Collection, mapping, and annotation of over 28,000 cDNA clones from japonica rice.</title>
        <authorList>
            <consortium name="The rice full-length cDNA consortium"/>
        </authorList>
    </citation>
    <scope>NUCLEOTIDE SEQUENCE [LARGE SCALE MRNA]</scope>
    <source>
        <strain>cv. Nipponbare</strain>
    </source>
</reference>